<organism>
    <name type="scientific">Arabidopsis thaliana</name>
    <name type="common">Mouse-ear cress</name>
    <dbReference type="NCBI Taxonomy" id="3702"/>
    <lineage>
        <taxon>Eukaryota</taxon>
        <taxon>Viridiplantae</taxon>
        <taxon>Streptophyta</taxon>
        <taxon>Embryophyta</taxon>
        <taxon>Tracheophyta</taxon>
        <taxon>Spermatophyta</taxon>
        <taxon>Magnoliopsida</taxon>
        <taxon>eudicotyledons</taxon>
        <taxon>Gunneridae</taxon>
        <taxon>Pentapetalae</taxon>
        <taxon>rosids</taxon>
        <taxon>malvids</taxon>
        <taxon>Brassicales</taxon>
        <taxon>Brassicaceae</taxon>
        <taxon>Camelineae</taxon>
        <taxon>Arabidopsis</taxon>
    </lineage>
</organism>
<reference key="1">
    <citation type="journal article" date="1997" name="Nat. Genet.">
        <title>The mitochondrial genome of Arabidopsis thaliana contains 57 genes in 366,924 nucleotides.</title>
        <authorList>
            <person name="Unseld M."/>
            <person name="Marienfeld J.R."/>
            <person name="Brandt P."/>
            <person name="Brennicke A."/>
        </authorList>
    </citation>
    <scope>NUCLEOTIDE SEQUENCE [LARGE SCALE GENOMIC DNA]</scope>
    <source>
        <strain>cv. C24</strain>
    </source>
</reference>
<reference key="2">
    <citation type="journal article" date="2018" name="Plant Cell">
        <title>Correction of persistent errors in Arabidopsis reference mitochondrial genomes.</title>
        <authorList>
            <person name="Sloan D.B."/>
            <person name="Wu Z."/>
            <person name="Sharbrough J."/>
        </authorList>
    </citation>
    <scope>NUCLEOTIDE SEQUENCE [LARGE SCALE GENOMIC DNA]</scope>
    <source>
        <strain>cv. Columbia</strain>
    </source>
</reference>
<reference key="3">
    <citation type="journal article" date="1999" name="Nature">
        <title>Sequence and analysis of chromosome 2 of the plant Arabidopsis thaliana.</title>
        <authorList>
            <person name="Lin X."/>
            <person name="Kaul S."/>
            <person name="Rounsley S.D."/>
            <person name="Shea T.P."/>
            <person name="Benito M.-I."/>
            <person name="Town C.D."/>
            <person name="Fujii C.Y."/>
            <person name="Mason T.M."/>
            <person name="Bowman C.L."/>
            <person name="Barnstead M.E."/>
            <person name="Feldblyum T.V."/>
            <person name="Buell C.R."/>
            <person name="Ketchum K.A."/>
            <person name="Lee J.J."/>
            <person name="Ronning C.M."/>
            <person name="Koo H.L."/>
            <person name="Moffat K.S."/>
            <person name="Cronin L.A."/>
            <person name="Shen M."/>
            <person name="Pai G."/>
            <person name="Van Aken S."/>
            <person name="Umayam L."/>
            <person name="Tallon L.J."/>
            <person name="Gill J.E."/>
            <person name="Adams M.D."/>
            <person name="Carrera A.J."/>
            <person name="Creasy T.H."/>
            <person name="Goodman H.M."/>
            <person name="Somerville C.R."/>
            <person name="Copenhaver G.P."/>
            <person name="Preuss D."/>
            <person name="Nierman W.C."/>
            <person name="White O."/>
            <person name="Eisen J.A."/>
            <person name="Salzberg S.L."/>
            <person name="Fraser C.M."/>
            <person name="Venter J.C."/>
        </authorList>
    </citation>
    <scope>NUCLEOTIDE SEQUENCE [LARGE SCALE GENOMIC DNA] (AT2G07706)</scope>
    <source>
        <strain>cv. Columbia</strain>
    </source>
</reference>
<reference key="4">
    <citation type="submission" date="2005-03" db="EMBL/GenBank/DDBJ databases">
        <authorList>
            <person name="Underwood B.A."/>
            <person name="Xiao Y.-L."/>
            <person name="Moskal W.A. Jr."/>
            <person name="Monaghan E.L."/>
            <person name="Wang W."/>
            <person name="Redman J.C."/>
            <person name="Wu H.C."/>
            <person name="Utterback T."/>
            <person name="Town C.D."/>
        </authorList>
    </citation>
    <scope>NUCLEOTIDE SEQUENCE [LARGE SCALE GENOMIC DNA]</scope>
    <source>
        <strain>cv. Columbia</strain>
    </source>
</reference>
<reference key="5">
    <citation type="journal article" date="2005" name="Plant Physiol.">
        <title>Analysis of the cDNAs of hypothetical genes on Arabidopsis chromosome 2 reveals numerous transcript variants.</title>
        <authorList>
            <person name="Xiao Y.-L."/>
            <person name="Smith S.R."/>
            <person name="Ishmael N."/>
            <person name="Redman J.C."/>
            <person name="Kumar N."/>
            <person name="Monaghan E.L."/>
            <person name="Ayele M."/>
            <person name="Haas B.J."/>
            <person name="Wu H.C."/>
            <person name="Town C.D."/>
        </authorList>
    </citation>
    <scope>NUCLEOTIDE SEQUENCE [LARGE SCALE MRNA] (AT2G07706)</scope>
    <source>
        <strain>cv. Columbia</strain>
    </source>
</reference>
<dbReference type="EMBL" id="Y08501">
    <property type="protein sequence ID" value="CAA69731.1"/>
    <property type="molecule type" value="Genomic_DNA"/>
</dbReference>
<dbReference type="EMBL" id="BK010421">
    <property type="status" value="NOT_ANNOTATED_CDS"/>
    <property type="molecule type" value="Genomic_DNA"/>
</dbReference>
<dbReference type="EMBL" id="AC007729">
    <property type="protein sequence ID" value="AAM15499.1"/>
    <property type="molecule type" value="Genomic_DNA"/>
</dbReference>
<dbReference type="EMBL" id="AY954784">
    <property type="protein sequence ID" value="AAX55110.1"/>
    <property type="molecule type" value="Genomic_DNA"/>
</dbReference>
<dbReference type="EMBL" id="AY234409">
    <property type="protein sequence ID" value="AAO92053.1"/>
    <property type="molecule type" value="mRNA"/>
</dbReference>
<dbReference type="RefSeq" id="NP_085507.1">
    <property type="nucleotide sequence ID" value="NC_001284.2"/>
</dbReference>
<dbReference type="PaxDb" id="3702-ATMG00470.1"/>
<dbReference type="EnsemblPlants" id="ATMG00470.1">
    <property type="protein sequence ID" value="ATMG00470.1"/>
    <property type="gene ID" value="ATMG00470"/>
</dbReference>
<dbReference type="Gramene" id="ATMG00470.1">
    <property type="protein sequence ID" value="ATMG00470.1"/>
    <property type="gene ID" value="ATMG00470"/>
</dbReference>
<dbReference type="Araport" id="ATMG00470"/>
<dbReference type="TAIR" id="ATMG00470">
    <property type="gene designation" value="ORF122A"/>
</dbReference>
<dbReference type="HOGENOM" id="CLU_2029898_0_0_1"/>
<dbReference type="InParanoid" id="P93302"/>
<dbReference type="PRO" id="PR:P93302"/>
<dbReference type="Proteomes" id="UP000006548">
    <property type="component" value="Mitochondrion MT"/>
</dbReference>
<dbReference type="ExpressionAtlas" id="P93302">
    <property type="expression patterns" value="baseline"/>
</dbReference>
<dbReference type="GO" id="GO:0005739">
    <property type="term" value="C:mitochondrion"/>
    <property type="evidence" value="ECO:0007669"/>
    <property type="project" value="UniProtKB-SubCell"/>
</dbReference>
<proteinExistence type="evidence at transcript level"/>
<accession>P93302</accession>
<accession>Q58G25</accession>
<accession>Q84RD3</accession>
<name>M470_ARATH</name>
<evidence type="ECO:0000305" key="1"/>
<protein>
    <recommendedName>
        <fullName>Uncharacterized mitochondrial protein AtMg00470</fullName>
    </recommendedName>
    <alternativeName>
        <fullName>ORF122a</fullName>
    </alternativeName>
</protein>
<sequence>MILNLDTNIFNHGLSRHNILAFSQGFPIGLPCRNWIEVGLRLRLRLLLELAVGNFPQGFKIHLSGSFQAVRLALFSSFTSLRTDELLLIETRPSYLSSVQGLKYYVIFIDNYSQGSVGCSRN</sequence>
<feature type="chain" id="PRO_0000196772" description="Uncharacterized mitochondrial protein AtMg00470">
    <location>
        <begin position="1"/>
        <end position="122"/>
    </location>
</feature>
<comment type="subcellular location">
    <subcellularLocation>
        <location evidence="1">Mitochondrion</location>
    </subcellularLocation>
</comment>
<comment type="miscellaneous">
    <text>A stretch of 270 kb of the mitochondrial genome is duplicated within the centromere of chromosome 2 resulting in the duplication of the gene. The expression of this duplicated gene (At2g07706) is demonstrated.</text>
</comment>
<keyword id="KW-0496">Mitochondrion</keyword>
<keyword id="KW-1185">Reference proteome</keyword>
<geneLocation type="mitochondrion"/>
<gene>
    <name type="ordered locus">AtMg00470</name>
</gene>